<accession>P05190</accession>
<sequence length="484" mass="54448">MSKPFLSLLSLSLLLFTSTCLATSSEFDRLNQCRLDNINALEPDHRVESEAGLTETWNPNHPELRCAGVSLIRRTIDPNGLHLPSYSPSPQLIYIIQGKGVIGLTLPGCPQTYQEPRSSQSRQGSRQQQPDSHQKIRRFRKGDIIAIPSGIPYWTYNNGDEPLVAISLLDTSNIANQLDSTPRVFYLVGNPEVEFPETQEEQQERHQQKHSLPVGRRGGQHQQEEESEEQKDGNSVLSGFSSEFLAHTFNTEEDTAKRLRSPRDKRNQIVRVEGGLRIINPEGQQEEEEEEEEEKQRSEQGRNGLEETICSLKIRENIAQPARADLYNPRAGSISTANSLTLPILRYLRLSAEYVRLYRNGIYAPHWNINANSLLYVIRGEGRVRIVNSQGNAVFDNKVTKGQLVVVPQNFVVAEQAGEEEGLEYLVFKTNDRAAVSHVQQVFRATPADVLANAFGLRQRQVTELKLSGNRGPLVHPQSQSQSN</sequence>
<feature type="signal peptide" evidence="2">
    <location>
        <begin position="1"/>
        <end position="22"/>
    </location>
</feature>
<feature type="chain" id="PRO_0000032078" description="Legumin type B alpha chain">
    <location>
        <begin position="23"/>
        <end position="303"/>
    </location>
</feature>
<feature type="chain" id="PRO_0000032079" description="Legumin type B beta chain">
    <location>
        <begin position="304"/>
        <end position="484"/>
    </location>
</feature>
<feature type="domain" description="Cupin type-1 1" evidence="2">
    <location>
        <begin position="38"/>
        <end position="257"/>
    </location>
</feature>
<feature type="domain" description="Cupin type-1 2" evidence="2">
    <location>
        <begin position="316"/>
        <end position="463"/>
    </location>
</feature>
<feature type="region of interest" description="Disordered" evidence="3">
    <location>
        <begin position="109"/>
        <end position="141"/>
    </location>
</feature>
<feature type="region of interest" description="Disordered" evidence="3">
    <location>
        <begin position="196"/>
        <end position="236"/>
    </location>
</feature>
<feature type="region of interest" description="Disordered" evidence="3">
    <location>
        <begin position="275"/>
        <end position="304"/>
    </location>
</feature>
<feature type="compositionally biased region" description="Low complexity" evidence="3">
    <location>
        <begin position="117"/>
        <end position="129"/>
    </location>
</feature>
<feature type="compositionally biased region" description="Acidic residues" evidence="3">
    <location>
        <begin position="284"/>
        <end position="293"/>
    </location>
</feature>
<feature type="disulfide bond" evidence="1">
    <location>
        <begin position="33"/>
        <end position="66"/>
    </location>
</feature>
<feature type="disulfide bond" description="Interchain (between alpha and beta chains)" evidence="2">
    <location>
        <begin position="109"/>
        <end position="310"/>
    </location>
</feature>
<keyword id="KW-1015">Disulfide bond</keyword>
<keyword id="KW-0708">Seed storage protein</keyword>
<keyword id="KW-0732">Signal</keyword>
<keyword id="KW-0758">Storage protein</keyword>
<proteinExistence type="inferred from homology"/>
<protein>
    <recommendedName>
        <fullName>Legumin type B</fullName>
    </recommendedName>
    <component>
        <recommendedName>
            <fullName>Legumin type B alpha chain</fullName>
        </recommendedName>
        <alternativeName>
            <fullName>Legumin type B acidic chain</fullName>
        </alternativeName>
    </component>
    <component>
        <recommendedName>
            <fullName>Legumin type B beta chain</fullName>
        </recommendedName>
        <alternativeName>
            <fullName>Legumin type B basic chain</fullName>
        </alternativeName>
    </component>
</protein>
<evidence type="ECO:0000250" key="1"/>
<evidence type="ECO:0000255" key="2"/>
<evidence type="ECO:0000256" key="3">
    <source>
        <dbReference type="SAM" id="MobiDB-lite"/>
    </source>
</evidence>
<evidence type="ECO:0000305" key="4"/>
<reference key="1">
    <citation type="journal article" date="1986" name="Nucleic Acids Res.">
        <title>The legumin gene family: structure of a B type gene of Vicia faba and a possible legumin gene specific regulatory element.</title>
        <authorList>
            <person name="Baeumlein H."/>
            <person name="Wobus U."/>
            <person name="Pustell J."/>
            <person name="Kafatos F.C."/>
        </authorList>
    </citation>
    <scope>NUCLEOTIDE SEQUENCE [GENOMIC DNA]</scope>
</reference>
<comment type="function">
    <text>This protein found in the seeds of many leguminous and non-leguminous plants is the source of sulfur-containing amino acids in seed meals.</text>
</comment>
<comment type="subunit">
    <text>Hexamer; each subunit is composed of an acidic and a basic chain derived from a single precursor and linked by a disulfide bond.</text>
</comment>
<comment type="similarity">
    <text evidence="4">Belongs to the 11S seed storage protein (globulins) family.</text>
</comment>
<dbReference type="EMBL" id="X03677">
    <property type="protein sequence ID" value="CAA27313.1"/>
    <property type="molecule type" value="Genomic_DNA"/>
</dbReference>
<dbReference type="PIR" id="A24942">
    <property type="entry name" value="A24942"/>
</dbReference>
<dbReference type="SMR" id="P05190"/>
<dbReference type="GO" id="GO:0045735">
    <property type="term" value="F:nutrient reservoir activity"/>
    <property type="evidence" value="ECO:0007669"/>
    <property type="project" value="UniProtKB-KW"/>
</dbReference>
<dbReference type="CDD" id="cd02243">
    <property type="entry name" value="cupin_11S_legumin_C"/>
    <property type="match status" value="1"/>
</dbReference>
<dbReference type="CDD" id="cd02242">
    <property type="entry name" value="cupin_11S_legumin_N"/>
    <property type="match status" value="1"/>
</dbReference>
<dbReference type="FunFam" id="2.60.120.10:FF:000073">
    <property type="entry name" value="Glycinin G1"/>
    <property type="match status" value="1"/>
</dbReference>
<dbReference type="FunFam" id="2.60.120.10:FF:000124">
    <property type="entry name" value="Glycinin G5"/>
    <property type="match status" value="1"/>
</dbReference>
<dbReference type="Gene3D" id="2.60.120.10">
    <property type="entry name" value="Jelly Rolls"/>
    <property type="match status" value="2"/>
</dbReference>
<dbReference type="InterPro" id="IPR022379">
    <property type="entry name" value="11S_seedstore_CS"/>
</dbReference>
<dbReference type="InterPro" id="IPR006044">
    <property type="entry name" value="11S_seedstore_pln"/>
</dbReference>
<dbReference type="InterPro" id="IPR006045">
    <property type="entry name" value="Cupin_1"/>
</dbReference>
<dbReference type="InterPro" id="IPR014710">
    <property type="entry name" value="RmlC-like_jellyroll"/>
</dbReference>
<dbReference type="InterPro" id="IPR011051">
    <property type="entry name" value="RmlC_Cupin_sf"/>
</dbReference>
<dbReference type="InterPro" id="IPR050253">
    <property type="entry name" value="Seed_Storage-Functional"/>
</dbReference>
<dbReference type="PANTHER" id="PTHR31189:SF63">
    <property type="entry name" value="GLYCININ G5"/>
    <property type="match status" value="1"/>
</dbReference>
<dbReference type="PANTHER" id="PTHR31189">
    <property type="entry name" value="OS03G0336100 PROTEIN-RELATED"/>
    <property type="match status" value="1"/>
</dbReference>
<dbReference type="Pfam" id="PF00190">
    <property type="entry name" value="Cupin_1"/>
    <property type="match status" value="2"/>
</dbReference>
<dbReference type="PRINTS" id="PR00439">
    <property type="entry name" value="11SGLOBULIN"/>
</dbReference>
<dbReference type="SMART" id="SM00835">
    <property type="entry name" value="Cupin_1"/>
    <property type="match status" value="2"/>
</dbReference>
<dbReference type="SUPFAM" id="SSF51182">
    <property type="entry name" value="RmlC-like cupins"/>
    <property type="match status" value="1"/>
</dbReference>
<dbReference type="PROSITE" id="PS00305">
    <property type="entry name" value="11S_SEED_STORAGE"/>
    <property type="match status" value="1"/>
</dbReference>
<organism>
    <name type="scientific">Vicia faba</name>
    <name type="common">Broad bean</name>
    <name type="synonym">Faba vulgaris</name>
    <dbReference type="NCBI Taxonomy" id="3906"/>
    <lineage>
        <taxon>Eukaryota</taxon>
        <taxon>Viridiplantae</taxon>
        <taxon>Streptophyta</taxon>
        <taxon>Embryophyta</taxon>
        <taxon>Tracheophyta</taxon>
        <taxon>Spermatophyta</taxon>
        <taxon>Magnoliopsida</taxon>
        <taxon>eudicotyledons</taxon>
        <taxon>Gunneridae</taxon>
        <taxon>Pentapetalae</taxon>
        <taxon>rosids</taxon>
        <taxon>fabids</taxon>
        <taxon>Fabales</taxon>
        <taxon>Fabaceae</taxon>
        <taxon>Papilionoideae</taxon>
        <taxon>50 kb inversion clade</taxon>
        <taxon>NPAAA clade</taxon>
        <taxon>Hologalegina</taxon>
        <taxon>IRL clade</taxon>
        <taxon>Fabeae</taxon>
        <taxon>Vicia</taxon>
    </lineage>
</organism>
<name>LEGB4_VICFA</name>
<gene>
    <name type="primary">LEB4</name>
</gene>